<proteinExistence type="inferred from homology"/>
<reference key="1">
    <citation type="journal article" date="2004" name="Nat. Genet.">
        <title>Comparison of genome degradation in Paratyphi A and Typhi, human-restricted serovars of Salmonella enterica that cause typhoid.</title>
        <authorList>
            <person name="McClelland M."/>
            <person name="Sanderson K.E."/>
            <person name="Clifton S.W."/>
            <person name="Latreille P."/>
            <person name="Porwollik S."/>
            <person name="Sabo A."/>
            <person name="Meyer R."/>
            <person name="Bieri T."/>
            <person name="Ozersky P."/>
            <person name="McLellan M."/>
            <person name="Harkins C.R."/>
            <person name="Wang C."/>
            <person name="Nguyen C."/>
            <person name="Berghoff A."/>
            <person name="Elliott G."/>
            <person name="Kohlberg S."/>
            <person name="Strong C."/>
            <person name="Du F."/>
            <person name="Carter J."/>
            <person name="Kremizki C."/>
            <person name="Layman D."/>
            <person name="Leonard S."/>
            <person name="Sun H."/>
            <person name="Fulton L."/>
            <person name="Nash W."/>
            <person name="Miner T."/>
            <person name="Minx P."/>
            <person name="Delehaunty K."/>
            <person name="Fronick C."/>
            <person name="Magrini V."/>
            <person name="Nhan M."/>
            <person name="Warren W."/>
            <person name="Florea L."/>
            <person name="Spieth J."/>
            <person name="Wilson R.K."/>
        </authorList>
    </citation>
    <scope>NUCLEOTIDE SEQUENCE [LARGE SCALE GENOMIC DNA]</scope>
    <source>
        <strain>ATCC 9150 / SARB42</strain>
    </source>
</reference>
<sequence length="273" mass="29820">MAVVKCKPTSPGRRHVVKVVNPELHKGKPFAPLVEKNSKSGGRNNNGRITTRHIGGGHKQAYRIVDFKRNKDGIPAVVERLEYDPNRSANIALVLYKDGERRYILAPKGLKAGDQIQSGVDAAIKAGNTLPMRNIPVGSTVHNVEMKPGKGGQLARSAGTYVQIVARDGAYVTLRLRSGEMRKVEADCRATLGEVGNAEHMLRVLGKAGAARWRGVRPTVRGTAMNPVDHPHGGGEGRNFGKHPVTPWGVQTKGKKTRSNKRTDKFIVRRRSK</sequence>
<keyword id="KW-0687">Ribonucleoprotein</keyword>
<keyword id="KW-0689">Ribosomal protein</keyword>
<keyword id="KW-0694">RNA-binding</keyword>
<keyword id="KW-0699">rRNA-binding</keyword>
<evidence type="ECO:0000255" key="1">
    <source>
        <dbReference type="HAMAP-Rule" id="MF_01320"/>
    </source>
</evidence>
<evidence type="ECO:0000256" key="2">
    <source>
        <dbReference type="SAM" id="MobiDB-lite"/>
    </source>
</evidence>
<evidence type="ECO:0000305" key="3"/>
<name>RL2_SALPA</name>
<accession>Q5PIV5</accession>
<feature type="chain" id="PRO_0000237239" description="Large ribosomal subunit protein uL2">
    <location>
        <begin position="1"/>
        <end position="273"/>
    </location>
</feature>
<feature type="region of interest" description="Disordered" evidence="2">
    <location>
        <begin position="28"/>
        <end position="53"/>
    </location>
</feature>
<feature type="region of interest" description="Disordered" evidence="2">
    <location>
        <begin position="221"/>
        <end position="273"/>
    </location>
</feature>
<feature type="compositionally biased region" description="Low complexity" evidence="2">
    <location>
        <begin position="39"/>
        <end position="48"/>
    </location>
</feature>
<organism>
    <name type="scientific">Salmonella paratyphi A (strain ATCC 9150 / SARB42)</name>
    <dbReference type="NCBI Taxonomy" id="295319"/>
    <lineage>
        <taxon>Bacteria</taxon>
        <taxon>Pseudomonadati</taxon>
        <taxon>Pseudomonadota</taxon>
        <taxon>Gammaproteobacteria</taxon>
        <taxon>Enterobacterales</taxon>
        <taxon>Enterobacteriaceae</taxon>
        <taxon>Salmonella</taxon>
    </lineage>
</organism>
<dbReference type="EMBL" id="CP000026">
    <property type="protein sequence ID" value="AAV79119.1"/>
    <property type="molecule type" value="Genomic_DNA"/>
</dbReference>
<dbReference type="RefSeq" id="WP_000301869.1">
    <property type="nucleotide sequence ID" value="NC_006511.1"/>
</dbReference>
<dbReference type="SMR" id="Q5PIV5"/>
<dbReference type="GeneID" id="97393170"/>
<dbReference type="KEGG" id="spt:SPA3303"/>
<dbReference type="HOGENOM" id="CLU_036235_2_1_6"/>
<dbReference type="Proteomes" id="UP000008185">
    <property type="component" value="Chromosome"/>
</dbReference>
<dbReference type="GO" id="GO:0005829">
    <property type="term" value="C:cytosol"/>
    <property type="evidence" value="ECO:0007669"/>
    <property type="project" value="UniProtKB-ARBA"/>
</dbReference>
<dbReference type="GO" id="GO:0015934">
    <property type="term" value="C:large ribosomal subunit"/>
    <property type="evidence" value="ECO:0007669"/>
    <property type="project" value="InterPro"/>
</dbReference>
<dbReference type="GO" id="GO:0019843">
    <property type="term" value="F:rRNA binding"/>
    <property type="evidence" value="ECO:0007669"/>
    <property type="project" value="UniProtKB-UniRule"/>
</dbReference>
<dbReference type="GO" id="GO:0003735">
    <property type="term" value="F:structural constituent of ribosome"/>
    <property type="evidence" value="ECO:0007669"/>
    <property type="project" value="InterPro"/>
</dbReference>
<dbReference type="GO" id="GO:0016740">
    <property type="term" value="F:transferase activity"/>
    <property type="evidence" value="ECO:0007669"/>
    <property type="project" value="InterPro"/>
</dbReference>
<dbReference type="GO" id="GO:0002181">
    <property type="term" value="P:cytoplasmic translation"/>
    <property type="evidence" value="ECO:0007669"/>
    <property type="project" value="TreeGrafter"/>
</dbReference>
<dbReference type="FunFam" id="2.30.30.30:FF:000001">
    <property type="entry name" value="50S ribosomal protein L2"/>
    <property type="match status" value="1"/>
</dbReference>
<dbReference type="FunFam" id="2.40.50.140:FF:000003">
    <property type="entry name" value="50S ribosomal protein L2"/>
    <property type="match status" value="1"/>
</dbReference>
<dbReference type="FunFam" id="4.10.950.10:FF:000001">
    <property type="entry name" value="50S ribosomal protein L2"/>
    <property type="match status" value="1"/>
</dbReference>
<dbReference type="Gene3D" id="2.30.30.30">
    <property type="match status" value="1"/>
</dbReference>
<dbReference type="Gene3D" id="2.40.50.140">
    <property type="entry name" value="Nucleic acid-binding proteins"/>
    <property type="match status" value="1"/>
</dbReference>
<dbReference type="Gene3D" id="4.10.950.10">
    <property type="entry name" value="Ribosomal protein L2, domain 3"/>
    <property type="match status" value="1"/>
</dbReference>
<dbReference type="HAMAP" id="MF_01320_B">
    <property type="entry name" value="Ribosomal_uL2_B"/>
    <property type="match status" value="1"/>
</dbReference>
<dbReference type="InterPro" id="IPR012340">
    <property type="entry name" value="NA-bd_OB-fold"/>
</dbReference>
<dbReference type="InterPro" id="IPR014722">
    <property type="entry name" value="Rib_uL2_dom2"/>
</dbReference>
<dbReference type="InterPro" id="IPR002171">
    <property type="entry name" value="Ribosomal_uL2"/>
</dbReference>
<dbReference type="InterPro" id="IPR005880">
    <property type="entry name" value="Ribosomal_uL2_bac/org-type"/>
</dbReference>
<dbReference type="InterPro" id="IPR022669">
    <property type="entry name" value="Ribosomal_uL2_C"/>
</dbReference>
<dbReference type="InterPro" id="IPR022671">
    <property type="entry name" value="Ribosomal_uL2_CS"/>
</dbReference>
<dbReference type="InterPro" id="IPR014726">
    <property type="entry name" value="Ribosomal_uL2_dom3"/>
</dbReference>
<dbReference type="InterPro" id="IPR022666">
    <property type="entry name" value="Ribosomal_uL2_RNA-bd_dom"/>
</dbReference>
<dbReference type="InterPro" id="IPR008991">
    <property type="entry name" value="Translation_prot_SH3-like_sf"/>
</dbReference>
<dbReference type="NCBIfam" id="TIGR01171">
    <property type="entry name" value="rplB_bact"/>
    <property type="match status" value="1"/>
</dbReference>
<dbReference type="PANTHER" id="PTHR13691:SF5">
    <property type="entry name" value="LARGE RIBOSOMAL SUBUNIT PROTEIN UL2M"/>
    <property type="match status" value="1"/>
</dbReference>
<dbReference type="PANTHER" id="PTHR13691">
    <property type="entry name" value="RIBOSOMAL PROTEIN L2"/>
    <property type="match status" value="1"/>
</dbReference>
<dbReference type="Pfam" id="PF00181">
    <property type="entry name" value="Ribosomal_L2"/>
    <property type="match status" value="1"/>
</dbReference>
<dbReference type="Pfam" id="PF03947">
    <property type="entry name" value="Ribosomal_L2_C"/>
    <property type="match status" value="1"/>
</dbReference>
<dbReference type="PIRSF" id="PIRSF002158">
    <property type="entry name" value="Ribosomal_L2"/>
    <property type="match status" value="1"/>
</dbReference>
<dbReference type="SMART" id="SM01383">
    <property type="entry name" value="Ribosomal_L2"/>
    <property type="match status" value="1"/>
</dbReference>
<dbReference type="SMART" id="SM01382">
    <property type="entry name" value="Ribosomal_L2_C"/>
    <property type="match status" value="1"/>
</dbReference>
<dbReference type="SUPFAM" id="SSF50249">
    <property type="entry name" value="Nucleic acid-binding proteins"/>
    <property type="match status" value="1"/>
</dbReference>
<dbReference type="SUPFAM" id="SSF50104">
    <property type="entry name" value="Translation proteins SH3-like domain"/>
    <property type="match status" value="1"/>
</dbReference>
<dbReference type="PROSITE" id="PS00467">
    <property type="entry name" value="RIBOSOMAL_L2"/>
    <property type="match status" value="1"/>
</dbReference>
<gene>
    <name evidence="1" type="primary">rplB</name>
    <name type="ordered locus">SPA3303</name>
</gene>
<protein>
    <recommendedName>
        <fullName evidence="1">Large ribosomal subunit protein uL2</fullName>
    </recommendedName>
    <alternativeName>
        <fullName evidence="3">50S ribosomal protein L2</fullName>
    </alternativeName>
</protein>
<comment type="function">
    <text evidence="1">One of the primary rRNA binding proteins. Required for association of the 30S and 50S subunits to form the 70S ribosome, for tRNA binding and peptide bond formation. It has been suggested to have peptidyltransferase activity; this is somewhat controversial. Makes several contacts with the 16S rRNA in the 70S ribosome.</text>
</comment>
<comment type="subunit">
    <text evidence="1">Part of the 50S ribosomal subunit. Forms a bridge to the 30S subunit in the 70S ribosome.</text>
</comment>
<comment type="similarity">
    <text evidence="1">Belongs to the universal ribosomal protein uL2 family.</text>
</comment>